<gene>
    <name evidence="17 19" type="primary">Clec12a</name>
    <name evidence="16" type="synonym">klrl1</name>
    <name evidence="15" type="synonym">Micl</name>
</gene>
<accession>Q504P2</accession>
<accession>Q8BN96</accession>
<sequence length="267" mass="30757">MSEEIVYANLKIQDPDKKEETQKSDKCGGKVSADASHSQQKTVLILILLCLLLFIGMGVLGGIFYTTLATEMIKSNQLQRAKEELQENVFLQLKHNLNSSKKIKNLSAMLQSTATQLCRELYSKEPEHKCKPCPKGSEWYKDSCYSQLNQYGTWQESVMACSARNASLLKVKNKDVLEFIKYKKLRYFWLALLPRKDRTQYPLSEKMFLSEESERSTDDIDKKYCGYIDRVNVYYTYCTDENNIICEETASKVQLESVLNGLPEDSR</sequence>
<name>CL12A_MOUSE</name>
<comment type="function">
    <text evidence="1 4 5 6 7 8 9 10 11 13 14">Myeloid inhibitory C-type lectin receptor that acts as a negative regulator of myeloid cell activation (PubMed:14739280, PubMed:15238421, PubMed:18350551, PubMed:24631154, PubMed:39143217). Myeloid cell inhibition is required to limit proinflammatory pathways and protect against excessive inflammation (PubMed:26275430, PubMed:39143217). Specifically recognizes and binds various structures, such as neutrophil extracellular traps (NETs) or monosodium urate crystals (PubMed:39143217). Also acts as a pattern-recognition receptor for pathogen-associated molecules, such as plasmodium hemozoin or mycobacterial micolic acid (PubMed:31269448, PubMed:36542980). Ligand-binding induces phosphorylation of its ITIM motif, followed by recruitment of tyrosine-protein phosphatases PTPN6 and PTPN11, which counteract tyrosine-protein kinase SYK, thereby preventing myeloid cell activation (PubMed:18350551, PubMed:24631154, PubMed:39143217). Acts as a pattern-recognition receptor for NETs in neutrophils: specifically recognizes DNA in NETs, leading to inhibit neutrophil activation and limit further NET formation (PubMed:39143217). This regulation is essential for controlling key neutrophil responses and limit NET-mediated inflammatory conditions (PubMed:39143217). Also recognizes dead cells by acting as a receptor for monosodium urate crystals, leading to down-regulate neutrophil activation (PubMed:24631154). Binding to monosodium urate crystals also promotes the type I interferon response (PubMed:31451663). Acts as an inhibitor of natural killer (NK) cell cytotoxicity (By similarity). Also acts as an ihibitor of dendritic cell maturation in an IL10-dependent manner (PubMed:30787988).</text>
</comment>
<comment type="subunit">
    <text evidence="1 12">Homodimer; disulfide-linked (PubMed:34638548). Interacts (when the ITIM motif is phosphorylated) with PTPN6 and PTPN11 (By similarity).</text>
</comment>
<comment type="subcellular location">
    <subcellularLocation>
        <location evidence="12">Cell membrane</location>
        <topology evidence="2">Single-pass type II membrane protein</topology>
    </subcellularLocation>
    <text evidence="1">Ligand binding leads to internalization.</text>
</comment>
<comment type="tissue specificity">
    <text evidence="5 6">Mainly expressed in lymphoid tissues (PubMed:15238421, PubMed:18350551). Preferentially expressed in peripheral blood leukocytes; less frequent in thymus, spleen, heart, brain and lung; and undetectable in other tissues (PubMed:15238421).</text>
</comment>
<comment type="domain">
    <text evidence="1">The immunoreceptor tyrosine-based inhibitor motif (ITIM) is involved in modulation of cellular responses (By similarity). The phosphorylated ITIM motif can bind the SH2 domain of several SH2-containing protein phosphatases, such as PTPN6 and PTPN11 (By similarity).</text>
</comment>
<comment type="PTM">
    <text evidence="11 12">Phosphorylated at Tyr-7 by SRC in the ITIM motif following ligand-binding, promoting recruitment of tyrosine-protein phosphatases PTPN6 and PTPN11.</text>
</comment>
<comment type="disruption phenotype">
    <text evidence="7 8 10 14">Mice show hyperinflammatory response (PubMed:24631154, PubMed:26275430, PubMed:39143217). Mice undergoing collagen antibody-induced arthritis show enhanced and non-resolving joint inflammation due to aberrant neutrophil function (PubMed:26275430, PubMed:39143217). Neutrophils exhibit significantly increased neutrophil extracellular traps (NETs) formation in vitro following monosodium urate stimulation (PubMed:39143217). Following plasmodium infection, mice are protected from experimental cerebral malaria, accompanied by a decrease in the frequency of brain-sequestered granzyme B-expressing T-cells (PubMed:31269448).</text>
</comment>
<keyword id="KW-1003">Cell membrane</keyword>
<keyword id="KW-1015">Disulfide bond</keyword>
<keyword id="KW-0325">Glycoprotein</keyword>
<keyword id="KW-0430">Lectin</keyword>
<keyword id="KW-0472">Membrane</keyword>
<keyword id="KW-0597">Phosphoprotein</keyword>
<keyword id="KW-0675">Receptor</keyword>
<keyword id="KW-1185">Reference proteome</keyword>
<keyword id="KW-0735">Signal-anchor</keyword>
<keyword id="KW-0812">Transmembrane</keyword>
<keyword id="KW-1133">Transmembrane helix</keyword>
<feature type="chain" id="PRO_0000313579" description="C-type lectin domain family 12 member A">
    <location>
        <begin position="1"/>
        <end position="267"/>
    </location>
</feature>
<feature type="topological domain" description="Cytoplasmic" evidence="2">
    <location>
        <begin position="1"/>
        <end position="43"/>
    </location>
</feature>
<feature type="transmembrane region" description="Helical; Signal-anchor for type II membrane protein" evidence="2">
    <location>
        <begin position="44"/>
        <end position="64"/>
    </location>
</feature>
<feature type="topological domain" description="Extracellular" evidence="2">
    <location>
        <begin position="65"/>
        <end position="267"/>
    </location>
</feature>
<feature type="domain" description="C-type lectin">
    <location>
        <begin position="140"/>
        <end position="247"/>
    </location>
</feature>
<feature type="short sequence motif" description="ITIM motif" evidence="1">
    <location>
        <begin position="5"/>
        <end position="10"/>
    </location>
</feature>
<feature type="modified residue" description="Phosphotyrosine" evidence="12">
    <location>
        <position position="7"/>
    </location>
</feature>
<feature type="glycosylation site" description="N-linked (GlcNAc...) asparagine" evidence="2">
    <location>
        <position position="98"/>
    </location>
</feature>
<feature type="glycosylation site" description="N-linked (GlcNAc...) asparagine" evidence="2">
    <location>
        <position position="105"/>
    </location>
</feature>
<feature type="glycosylation site" description="N-linked (GlcNAc...) asparagine" evidence="2">
    <location>
        <position position="165"/>
    </location>
</feature>
<feature type="disulfide bond" evidence="12">
    <location>
        <begin position="118"/>
        <end position="130"/>
    </location>
</feature>
<feature type="disulfide bond" evidence="1">
    <location>
        <begin position="133"/>
        <end position="144"/>
    </location>
</feature>
<feature type="disulfide bond" evidence="3">
    <location>
        <begin position="161"/>
        <end position="246"/>
    </location>
</feature>
<feature type="disulfide bond" evidence="3">
    <location>
        <begin position="225"/>
        <end position="238"/>
    </location>
</feature>
<feature type="mutagenesis site" description="Abolished phosphorylation." evidence="12">
    <original>Y</original>
    <variation>F</variation>
    <location>
        <position position="7"/>
    </location>
</feature>
<feature type="mutagenesis site" description="Decreased localization to the plasma membrane." evidence="12">
    <original>C</original>
    <variation>A</variation>
    <location>
        <position position="118"/>
    </location>
</feature>
<feature type="mutagenesis site" description="Does not affect cell-surface expression but increases its oligomerisation." evidence="12">
    <original>C</original>
    <variation>A</variation>
    <location>
        <position position="130"/>
    </location>
</feature>
<feature type="sequence conflict" description="In Ref. 1; BAC39163." evidence="18" ref="1">
    <original>F</original>
    <variation>S</variation>
    <location>
        <position position="90"/>
    </location>
</feature>
<proteinExistence type="evidence at protein level"/>
<protein>
    <recommendedName>
        <fullName evidence="18">C-type lectin domain family 12 member A</fullName>
    </recommendedName>
    <alternativeName>
        <fullName evidence="16">Killer cell C-type lectin-like receptor L1</fullName>
        <shortName evidence="16">mKLRL1</shortName>
    </alternativeName>
    <alternativeName>
        <fullName evidence="15">Myeloid inhibitory C-type lectin-like receptor</fullName>
        <shortName evidence="15">MICL</shortName>
        <shortName evidence="17">mMICL</shortName>
    </alternativeName>
    <cdAntigenName>CD371</cdAntigenName>
</protein>
<organism>
    <name type="scientific">Mus musculus</name>
    <name type="common">Mouse</name>
    <dbReference type="NCBI Taxonomy" id="10090"/>
    <lineage>
        <taxon>Eukaryota</taxon>
        <taxon>Metazoa</taxon>
        <taxon>Chordata</taxon>
        <taxon>Craniata</taxon>
        <taxon>Vertebrata</taxon>
        <taxon>Euteleostomi</taxon>
        <taxon>Mammalia</taxon>
        <taxon>Eutheria</taxon>
        <taxon>Euarchontoglires</taxon>
        <taxon>Glires</taxon>
        <taxon>Rodentia</taxon>
        <taxon>Myomorpha</taxon>
        <taxon>Muroidea</taxon>
        <taxon>Muridae</taxon>
        <taxon>Murinae</taxon>
        <taxon>Mus</taxon>
        <taxon>Mus</taxon>
    </lineage>
</organism>
<reference key="1">
    <citation type="journal article" date="2005" name="Science">
        <title>The transcriptional landscape of the mammalian genome.</title>
        <authorList>
            <person name="Carninci P."/>
            <person name="Kasukawa T."/>
            <person name="Katayama S."/>
            <person name="Gough J."/>
            <person name="Frith M.C."/>
            <person name="Maeda N."/>
            <person name="Oyama R."/>
            <person name="Ravasi T."/>
            <person name="Lenhard B."/>
            <person name="Wells C."/>
            <person name="Kodzius R."/>
            <person name="Shimokawa K."/>
            <person name="Bajic V.B."/>
            <person name="Brenner S.E."/>
            <person name="Batalov S."/>
            <person name="Forrest A.R."/>
            <person name="Zavolan M."/>
            <person name="Davis M.J."/>
            <person name="Wilming L.G."/>
            <person name="Aidinis V."/>
            <person name="Allen J.E."/>
            <person name="Ambesi-Impiombato A."/>
            <person name="Apweiler R."/>
            <person name="Aturaliya R.N."/>
            <person name="Bailey T.L."/>
            <person name="Bansal M."/>
            <person name="Baxter L."/>
            <person name="Beisel K.W."/>
            <person name="Bersano T."/>
            <person name="Bono H."/>
            <person name="Chalk A.M."/>
            <person name="Chiu K.P."/>
            <person name="Choudhary V."/>
            <person name="Christoffels A."/>
            <person name="Clutterbuck D.R."/>
            <person name="Crowe M.L."/>
            <person name="Dalla E."/>
            <person name="Dalrymple B.P."/>
            <person name="de Bono B."/>
            <person name="Della Gatta G."/>
            <person name="di Bernardo D."/>
            <person name="Down T."/>
            <person name="Engstrom P."/>
            <person name="Fagiolini M."/>
            <person name="Faulkner G."/>
            <person name="Fletcher C.F."/>
            <person name="Fukushima T."/>
            <person name="Furuno M."/>
            <person name="Futaki S."/>
            <person name="Gariboldi M."/>
            <person name="Georgii-Hemming P."/>
            <person name="Gingeras T.R."/>
            <person name="Gojobori T."/>
            <person name="Green R.E."/>
            <person name="Gustincich S."/>
            <person name="Harbers M."/>
            <person name="Hayashi Y."/>
            <person name="Hensch T.K."/>
            <person name="Hirokawa N."/>
            <person name="Hill D."/>
            <person name="Huminiecki L."/>
            <person name="Iacono M."/>
            <person name="Ikeo K."/>
            <person name="Iwama A."/>
            <person name="Ishikawa T."/>
            <person name="Jakt M."/>
            <person name="Kanapin A."/>
            <person name="Katoh M."/>
            <person name="Kawasawa Y."/>
            <person name="Kelso J."/>
            <person name="Kitamura H."/>
            <person name="Kitano H."/>
            <person name="Kollias G."/>
            <person name="Krishnan S.P."/>
            <person name="Kruger A."/>
            <person name="Kummerfeld S.K."/>
            <person name="Kurochkin I.V."/>
            <person name="Lareau L.F."/>
            <person name="Lazarevic D."/>
            <person name="Lipovich L."/>
            <person name="Liu J."/>
            <person name="Liuni S."/>
            <person name="McWilliam S."/>
            <person name="Madan Babu M."/>
            <person name="Madera M."/>
            <person name="Marchionni L."/>
            <person name="Matsuda H."/>
            <person name="Matsuzawa S."/>
            <person name="Miki H."/>
            <person name="Mignone F."/>
            <person name="Miyake S."/>
            <person name="Morris K."/>
            <person name="Mottagui-Tabar S."/>
            <person name="Mulder N."/>
            <person name="Nakano N."/>
            <person name="Nakauchi H."/>
            <person name="Ng P."/>
            <person name="Nilsson R."/>
            <person name="Nishiguchi S."/>
            <person name="Nishikawa S."/>
            <person name="Nori F."/>
            <person name="Ohara O."/>
            <person name="Okazaki Y."/>
            <person name="Orlando V."/>
            <person name="Pang K.C."/>
            <person name="Pavan W.J."/>
            <person name="Pavesi G."/>
            <person name="Pesole G."/>
            <person name="Petrovsky N."/>
            <person name="Piazza S."/>
            <person name="Reed J."/>
            <person name="Reid J.F."/>
            <person name="Ring B.Z."/>
            <person name="Ringwald M."/>
            <person name="Rost B."/>
            <person name="Ruan Y."/>
            <person name="Salzberg S.L."/>
            <person name="Sandelin A."/>
            <person name="Schneider C."/>
            <person name="Schoenbach C."/>
            <person name="Sekiguchi K."/>
            <person name="Semple C.A."/>
            <person name="Seno S."/>
            <person name="Sessa L."/>
            <person name="Sheng Y."/>
            <person name="Shibata Y."/>
            <person name="Shimada H."/>
            <person name="Shimada K."/>
            <person name="Silva D."/>
            <person name="Sinclair B."/>
            <person name="Sperling S."/>
            <person name="Stupka E."/>
            <person name="Sugiura K."/>
            <person name="Sultana R."/>
            <person name="Takenaka Y."/>
            <person name="Taki K."/>
            <person name="Tammoja K."/>
            <person name="Tan S.L."/>
            <person name="Tang S."/>
            <person name="Taylor M.S."/>
            <person name="Tegner J."/>
            <person name="Teichmann S.A."/>
            <person name="Ueda H.R."/>
            <person name="van Nimwegen E."/>
            <person name="Verardo R."/>
            <person name="Wei C.L."/>
            <person name="Yagi K."/>
            <person name="Yamanishi H."/>
            <person name="Zabarovsky E."/>
            <person name="Zhu S."/>
            <person name="Zimmer A."/>
            <person name="Hide W."/>
            <person name="Bult C."/>
            <person name="Grimmond S.M."/>
            <person name="Teasdale R.D."/>
            <person name="Liu E.T."/>
            <person name="Brusic V."/>
            <person name="Quackenbush J."/>
            <person name="Wahlestedt C."/>
            <person name="Mattick J.S."/>
            <person name="Hume D.A."/>
            <person name="Kai C."/>
            <person name="Sasaki D."/>
            <person name="Tomaru Y."/>
            <person name="Fukuda S."/>
            <person name="Kanamori-Katayama M."/>
            <person name="Suzuki M."/>
            <person name="Aoki J."/>
            <person name="Arakawa T."/>
            <person name="Iida J."/>
            <person name="Imamura K."/>
            <person name="Itoh M."/>
            <person name="Kato T."/>
            <person name="Kawaji H."/>
            <person name="Kawagashira N."/>
            <person name="Kawashima T."/>
            <person name="Kojima M."/>
            <person name="Kondo S."/>
            <person name="Konno H."/>
            <person name="Nakano K."/>
            <person name="Ninomiya N."/>
            <person name="Nishio T."/>
            <person name="Okada M."/>
            <person name="Plessy C."/>
            <person name="Shibata K."/>
            <person name="Shiraki T."/>
            <person name="Suzuki S."/>
            <person name="Tagami M."/>
            <person name="Waki K."/>
            <person name="Watahiki A."/>
            <person name="Okamura-Oho Y."/>
            <person name="Suzuki H."/>
            <person name="Kawai J."/>
            <person name="Hayashizaki Y."/>
        </authorList>
    </citation>
    <scope>NUCLEOTIDE SEQUENCE [LARGE SCALE MRNA]</scope>
    <source>
        <strain>C57BL/6J</strain>
        <tissue>Eye</tissue>
    </source>
</reference>
<reference key="2">
    <citation type="journal article" date="2004" name="Genome Res.">
        <title>The status, quality, and expansion of the NIH full-length cDNA project: the Mammalian Gene Collection (MGC).</title>
        <authorList>
            <consortium name="The MGC Project Team"/>
        </authorList>
    </citation>
    <scope>NUCLEOTIDE SEQUENCE [LARGE SCALE MRNA]</scope>
    <source>
        <strain>C57BL/6NCr</strain>
        <tissue>Hematopoietic stem cell</tissue>
    </source>
</reference>
<reference key="3">
    <citation type="journal article" date="2004" name="Blood">
        <title>KLRL1, a novel killer cell lectinlike receptor, inhibits natural killer cell cytotoxicity.</title>
        <authorList>
            <person name="Han Y."/>
            <person name="Zhang M."/>
            <person name="Li N."/>
            <person name="Chen T."/>
            <person name="Zhang Y."/>
            <person name="Wan T."/>
            <person name="Cao X."/>
        </authorList>
    </citation>
    <scope>FUNCTION</scope>
    <scope>TISSUE SPECIFICITY</scope>
</reference>
<reference key="4">
    <citation type="journal article" date="2004" name="J. Biol. Chem.">
        <title>Identification and characterization of a novel human myeloid inhibitory C-type lectin-like receptor (MICL) that is predominantly expressed on granulocytes and monocytes.</title>
        <authorList>
            <person name="Marshall A.S.J."/>
            <person name="Willment J.A."/>
            <person name="Lin H.-H."/>
            <person name="Williams D.L."/>
            <person name="Gordon S."/>
            <person name="Brown G.D."/>
        </authorList>
    </citation>
    <scope>FUNCTION</scope>
</reference>
<reference key="5">
    <citation type="journal article" date="2008" name="Eur. J. Immunol.">
        <title>Characterisation of murine MICL (CLEC12A) and evidence for an endogenous ligand.</title>
        <authorList>
            <person name="Pyz E."/>
            <person name="Huysamen C."/>
            <person name="Marshall A.S."/>
            <person name="Gordon S."/>
            <person name="Taylor P.R."/>
            <person name="Brown G.D."/>
        </authorList>
    </citation>
    <scope>FUNCTION</scope>
    <scope>TISSUE SPECIFICITY</scope>
</reference>
<reference key="6">
    <citation type="journal article" date="2014" name="Immunity">
        <title>Clec12a is an inhibitory receptor for uric acid crystals that regulates inflammation in response to cell death.</title>
        <authorList>
            <person name="Neumann K."/>
            <person name="Castineiras-Vilarino M."/>
            <person name="Hoeckendorf U."/>
            <person name="Hannesschlaeger N."/>
            <person name="Lemeer S."/>
            <person name="Kupka D."/>
            <person name="Meyermann S."/>
            <person name="Lech M."/>
            <person name="Anders H.J."/>
            <person name="Kuster B."/>
            <person name="Busch D.H."/>
            <person name="Gewies A."/>
            <person name="Naumann R."/>
            <person name="Gross O."/>
            <person name="Ruland J."/>
        </authorList>
    </citation>
    <scope>FUNCTION</scope>
    <scope>DISRUPTION PHENOTYPE</scope>
</reference>
<reference key="7">
    <citation type="journal article" date="2016" name="Ann. Rheum. Dis.">
        <title>MICL controls inflammation in rheumatoid arthritis.</title>
        <authorList>
            <person name="Redelinghuys P."/>
            <person name="Whitehead L."/>
            <person name="Augello A."/>
            <person name="Drummond R.A."/>
            <person name="Levesque J.M."/>
            <person name="Vautier S."/>
            <person name="Reid D.M."/>
            <person name="Kerscher B."/>
            <person name="Taylor J.A."/>
            <person name="Nigrovic P.A."/>
            <person name="Wright J."/>
            <person name="Murray G.I."/>
            <person name="Willment J.A."/>
            <person name="Hocking L.J."/>
            <person name="Fernandes M.J."/>
            <person name="De Bari C."/>
            <person name="Mcinnes I.B."/>
            <person name="Brown G.D."/>
        </authorList>
    </citation>
    <scope>FUNCTION</scope>
    <scope>DISRUPTION PHENOTYPE</scope>
</reference>
<reference key="8">
    <citation type="journal article" date="2019" name="Am. J. Transl. Res.">
        <title>mKLRL1 regulates the maturation of dendritic cells and plays important roles in immune tolerance.</title>
        <authorList>
            <person name="Liu G."/>
            <person name="Yin S."/>
            <person name="Li P."/>
            <person name="Han Y."/>
            <person name="Zheng Y."/>
            <person name="Zhang Y."/>
            <person name="Liu S."/>
            <person name="Li J."/>
            <person name="Guo Z."/>
            <person name="Tao Y."/>
            <person name="An H."/>
            <person name="Xu S."/>
            <person name="Yu Y."/>
        </authorList>
    </citation>
    <scope>FUNCTION</scope>
</reference>
<reference key="9">
    <citation type="journal article" date="2019" name="Cell Rep.">
        <title>The C-type lectin receptor CLEC12A recognizes plasmodial hemozoin and contributes to cerebral malaria development.</title>
        <authorList>
            <person name="Raulf M.K."/>
            <person name="Johannssen T."/>
            <person name="Matthiesen S."/>
            <person name="Neumann K."/>
            <person name="Hachenberg S."/>
            <person name="Mayer-Lambertz S."/>
            <person name="Steinbeis F."/>
            <person name="Hegermann J."/>
            <person name="Seeberger P.H."/>
            <person name="Baumgaertner W."/>
            <person name="Strube C."/>
            <person name="Ruland J."/>
            <person name="Lepenies B."/>
        </authorList>
    </citation>
    <scope>FUNCTION</scope>
    <scope>DISRUPTION PHENOTYPE</scope>
</reference>
<reference key="10">
    <citation type="journal article" date="2019" name="Proc. Natl. Acad. Sci. U.S.A.">
        <title>The uric acid crystal receptor Clec12A potentiates type I interferon responses.</title>
        <authorList>
            <person name="Li K."/>
            <person name="Neumann K."/>
            <person name="Duhan V."/>
            <person name="Namineni S."/>
            <person name="Hansen A.L."/>
            <person name="Wartewig T."/>
            <person name="Kurgyis Z."/>
            <person name="Holm C.K."/>
            <person name="Heikenwalder M."/>
            <person name="Lang K.S."/>
            <person name="Ruland J."/>
        </authorList>
    </citation>
    <scope>FUNCTION</scope>
    <scope>PHOSPHORYLATION</scope>
</reference>
<reference key="11">
    <citation type="journal article" date="2021" name="Int. J. Mol. Sci.">
        <title>Regulation of the expression, oligomerisation and signaling of the inhibitory receptor CLEC12A by cysteine residues in the stalk region.</title>
        <authorList>
            <person name="Vitry J."/>
            <person name="Pare G."/>
            <person name="Murru A."/>
            <person name="Charest-Morin X."/>
            <person name="Maaroufi H."/>
            <person name="McLeish K.R."/>
            <person name="Naccache P.H."/>
            <person name="Fernandes M.J."/>
        </authorList>
    </citation>
    <scope>SUBCELLULAR LOCATION</scope>
    <scope>SUBUNIT</scope>
    <scope>DISULFIDE BOND</scope>
    <scope>PHOSPHORYLATION AT TYR-7</scope>
    <scope>MUTAGENESIS OF TYR-7; CYS-118 AND CYS-130</scope>
</reference>
<reference key="12">
    <citation type="journal article" date="2023" name="Tuberculosis">
        <title>Mycobacterial mycolic acids trigger inhibitory receptor Clec12A to suppress host immune responses.</title>
        <authorList>
            <person name="Nishimura N."/>
            <person name="Tomiyasu N."/>
            <person name="Torigoe S."/>
            <person name="Mizuno S."/>
            <person name="Fukano H."/>
            <person name="Ishikawa E."/>
            <person name="Katano H."/>
            <person name="Hoshino Y."/>
            <person name="Matsuo K."/>
            <person name="Takahashi M."/>
            <person name="Izumi Y."/>
            <person name="Bamba T."/>
            <person name="Akashi K."/>
            <person name="Yamasaki S."/>
        </authorList>
    </citation>
    <scope>FUNCTION</scope>
</reference>
<reference key="13">
    <citation type="journal article" date="2024" name="Nature">
        <title>Recognition and control of neutrophil extracellular trap formation by MICL.</title>
        <authorList>
            <person name="Malamud M."/>
            <person name="Whitehead L."/>
            <person name="McIntosh A."/>
            <person name="Colella F."/>
            <person name="Roelofs A.J."/>
            <person name="Kusakabe T."/>
            <person name="Dambuza I.M."/>
            <person name="Phillips-Brookes A."/>
            <person name="Salazar F."/>
            <person name="Perez F."/>
            <person name="Shoesmith R."/>
            <person name="Zakrzewski P."/>
            <person name="Sey E.A."/>
            <person name="Rodrigues C."/>
            <person name="Morvay P.L."/>
            <person name="Redelinghuys P."/>
            <person name="Bedekovic T."/>
            <person name="Fernandes M.J.G."/>
            <person name="Almizraq R."/>
            <person name="Branch D.R."/>
            <person name="Amulic B."/>
            <person name="Harvey J."/>
            <person name="Stewart D."/>
            <person name="Yuecel R."/>
            <person name="Reid D.M."/>
            <person name="McConnachie A."/>
            <person name="Pickering M.C."/>
            <person name="Botto M."/>
            <person name="Iliev I.D."/>
            <person name="McInnes I.B."/>
            <person name="De Bari C."/>
            <person name="Willment J.A."/>
            <person name="Brown G.D."/>
        </authorList>
    </citation>
    <scope>FUNCTION</scope>
    <scope>DISRUPTION PHENOTYPE</scope>
</reference>
<dbReference type="EMBL" id="AK084335">
    <property type="protein sequence ID" value="BAC39163.1"/>
    <property type="molecule type" value="mRNA"/>
</dbReference>
<dbReference type="EMBL" id="BC094904">
    <property type="protein sequence ID" value="AAH94904.1"/>
    <property type="molecule type" value="mRNA"/>
</dbReference>
<dbReference type="CCDS" id="CCDS20584.1"/>
<dbReference type="RefSeq" id="NP_808354.1">
    <property type="nucleotide sequence ID" value="NM_177686.4"/>
</dbReference>
<dbReference type="RefSeq" id="XP_011239625.1">
    <property type="nucleotide sequence ID" value="XM_011241323.2"/>
</dbReference>
<dbReference type="SMR" id="Q504P2"/>
<dbReference type="FunCoup" id="Q504P2">
    <property type="interactions" value="34"/>
</dbReference>
<dbReference type="STRING" id="10090.ENSMUSP00000063627"/>
<dbReference type="GlyCosmos" id="Q504P2">
    <property type="glycosylation" value="3 sites, No reported glycans"/>
</dbReference>
<dbReference type="GlyGen" id="Q504P2">
    <property type="glycosylation" value="4 sites, 1 N-linked glycan (1 site)"/>
</dbReference>
<dbReference type="iPTMnet" id="Q504P2"/>
<dbReference type="PhosphoSitePlus" id="Q504P2"/>
<dbReference type="jPOST" id="Q504P2"/>
<dbReference type="PaxDb" id="10090-ENSMUSP00000063627"/>
<dbReference type="ProteomicsDB" id="283565"/>
<dbReference type="GeneID" id="232413"/>
<dbReference type="KEGG" id="mmu:232413"/>
<dbReference type="UCSC" id="uc009efl.2">
    <property type="organism name" value="mouse"/>
</dbReference>
<dbReference type="AGR" id="MGI:3040968"/>
<dbReference type="CTD" id="160364"/>
<dbReference type="MGI" id="MGI:3040968">
    <property type="gene designation" value="Clec12a"/>
</dbReference>
<dbReference type="eggNOG" id="KOG4297">
    <property type="taxonomic scope" value="Eukaryota"/>
</dbReference>
<dbReference type="InParanoid" id="Q504P2"/>
<dbReference type="OrthoDB" id="10059571at2759"/>
<dbReference type="PhylomeDB" id="Q504P2"/>
<dbReference type="TreeFam" id="TF336674"/>
<dbReference type="Reactome" id="R-MMU-6798695">
    <property type="pathway name" value="Neutrophil degranulation"/>
</dbReference>
<dbReference type="BioGRID-ORCS" id="232413">
    <property type="hits" value="2 hits in 76 CRISPR screens"/>
</dbReference>
<dbReference type="PRO" id="PR:Q504P2"/>
<dbReference type="Proteomes" id="UP000000589">
    <property type="component" value="Unplaced"/>
</dbReference>
<dbReference type="RNAct" id="Q504P2">
    <property type="molecule type" value="protein"/>
</dbReference>
<dbReference type="GO" id="GO:0009986">
    <property type="term" value="C:cell surface"/>
    <property type="evidence" value="ECO:0000266"/>
    <property type="project" value="MGI"/>
</dbReference>
<dbReference type="GO" id="GO:0005886">
    <property type="term" value="C:plasma membrane"/>
    <property type="evidence" value="ECO:0000314"/>
    <property type="project" value="UniProtKB"/>
</dbReference>
<dbReference type="GO" id="GO:0030246">
    <property type="term" value="F:carbohydrate binding"/>
    <property type="evidence" value="ECO:0007669"/>
    <property type="project" value="UniProtKB-KW"/>
</dbReference>
<dbReference type="GO" id="GO:0038187">
    <property type="term" value="F:pattern recognition receptor activity"/>
    <property type="evidence" value="ECO:0000314"/>
    <property type="project" value="UniProtKB"/>
</dbReference>
<dbReference type="GO" id="GO:0019903">
    <property type="term" value="F:protein phosphatase binding"/>
    <property type="evidence" value="ECO:0000266"/>
    <property type="project" value="MGI"/>
</dbReference>
<dbReference type="GO" id="GO:0030545">
    <property type="term" value="F:signaling receptor regulator activity"/>
    <property type="evidence" value="ECO:0007669"/>
    <property type="project" value="InterPro"/>
</dbReference>
<dbReference type="GO" id="GO:0004888">
    <property type="term" value="F:transmembrane signaling receptor activity"/>
    <property type="evidence" value="ECO:0000314"/>
    <property type="project" value="UniProtKB"/>
</dbReference>
<dbReference type="GO" id="GO:2001199">
    <property type="term" value="P:negative regulation of dendritic cell differentiation"/>
    <property type="evidence" value="ECO:0000315"/>
    <property type="project" value="UniProtKB"/>
</dbReference>
<dbReference type="GO" id="GO:0050728">
    <property type="term" value="P:negative regulation of inflammatory response"/>
    <property type="evidence" value="ECO:0000314"/>
    <property type="project" value="UniProtKB"/>
</dbReference>
<dbReference type="GO" id="GO:0032815">
    <property type="term" value="P:negative regulation of natural killer cell activation"/>
    <property type="evidence" value="ECO:0000315"/>
    <property type="project" value="UniProtKB"/>
</dbReference>
<dbReference type="GO" id="GO:1902564">
    <property type="term" value="P:negative regulation of neutrophil activation"/>
    <property type="evidence" value="ECO:0000314"/>
    <property type="project" value="UniProtKB"/>
</dbReference>
<dbReference type="GO" id="GO:0032481">
    <property type="term" value="P:positive regulation of type I interferon production"/>
    <property type="evidence" value="ECO:0000315"/>
    <property type="project" value="UniProtKB"/>
</dbReference>
<dbReference type="GO" id="GO:0050776">
    <property type="term" value="P:regulation of immune response"/>
    <property type="evidence" value="ECO:0000266"/>
    <property type="project" value="MGI"/>
</dbReference>
<dbReference type="CDD" id="cd03593">
    <property type="entry name" value="CLECT_NK_receptors_like"/>
    <property type="match status" value="1"/>
</dbReference>
<dbReference type="FunFam" id="3.10.100.10:FF:000245">
    <property type="match status" value="1"/>
</dbReference>
<dbReference type="Gene3D" id="3.10.100.10">
    <property type="entry name" value="Mannose-Binding Protein A, subunit A"/>
    <property type="match status" value="1"/>
</dbReference>
<dbReference type="InterPro" id="IPR001304">
    <property type="entry name" value="C-type_lectin-like"/>
</dbReference>
<dbReference type="InterPro" id="IPR016186">
    <property type="entry name" value="C-type_lectin-like/link_sf"/>
</dbReference>
<dbReference type="InterPro" id="IPR042916">
    <property type="entry name" value="CLEC12A/B"/>
</dbReference>
<dbReference type="InterPro" id="IPR016187">
    <property type="entry name" value="CTDL_fold"/>
</dbReference>
<dbReference type="InterPro" id="IPR033992">
    <property type="entry name" value="NKR-like_CTLD"/>
</dbReference>
<dbReference type="PANTHER" id="PTHR47647:SF2">
    <property type="entry name" value="C-TYPE LECTIN DOMAIN FAMILY 12 MEMBER A"/>
    <property type="match status" value="1"/>
</dbReference>
<dbReference type="PANTHER" id="PTHR47647">
    <property type="entry name" value="C-TYPE LECTIN DOMAIN FAMILY 12 MEMBER B"/>
    <property type="match status" value="1"/>
</dbReference>
<dbReference type="Pfam" id="PF00059">
    <property type="entry name" value="Lectin_C"/>
    <property type="match status" value="1"/>
</dbReference>
<dbReference type="SMART" id="SM00034">
    <property type="entry name" value="CLECT"/>
    <property type="match status" value="1"/>
</dbReference>
<dbReference type="SUPFAM" id="SSF56436">
    <property type="entry name" value="C-type lectin-like"/>
    <property type="match status" value="1"/>
</dbReference>
<evidence type="ECO:0000250" key="1">
    <source>
        <dbReference type="UniProtKB" id="Q5QGZ9"/>
    </source>
</evidence>
<evidence type="ECO:0000255" key="2"/>
<evidence type="ECO:0000255" key="3">
    <source>
        <dbReference type="PROSITE-ProRule" id="PRU00040"/>
    </source>
</evidence>
<evidence type="ECO:0000269" key="4">
    <source>
    </source>
</evidence>
<evidence type="ECO:0000269" key="5">
    <source>
    </source>
</evidence>
<evidence type="ECO:0000269" key="6">
    <source>
    </source>
</evidence>
<evidence type="ECO:0000269" key="7">
    <source>
    </source>
</evidence>
<evidence type="ECO:0000269" key="8">
    <source>
    </source>
</evidence>
<evidence type="ECO:0000269" key="9">
    <source>
    </source>
</evidence>
<evidence type="ECO:0000269" key="10">
    <source>
    </source>
</evidence>
<evidence type="ECO:0000269" key="11">
    <source>
    </source>
</evidence>
<evidence type="ECO:0000269" key="12">
    <source>
    </source>
</evidence>
<evidence type="ECO:0000269" key="13">
    <source>
    </source>
</evidence>
<evidence type="ECO:0000269" key="14">
    <source>
    </source>
</evidence>
<evidence type="ECO:0000303" key="15">
    <source>
    </source>
</evidence>
<evidence type="ECO:0000303" key="16">
    <source>
    </source>
</evidence>
<evidence type="ECO:0000303" key="17">
    <source>
    </source>
</evidence>
<evidence type="ECO:0000305" key="18"/>
<evidence type="ECO:0000312" key="19">
    <source>
        <dbReference type="MGI" id="MGI:3040968"/>
    </source>
</evidence>